<feature type="chain" id="PRO_0000303736" description="Exodeoxyribonuclease 7 small subunit">
    <location>
        <begin position="1"/>
        <end position="80"/>
    </location>
</feature>
<organism>
    <name type="scientific">Pseudomonas fluorescens (strain ATCC BAA-477 / NRRL B-23932 / Pf-5)</name>
    <dbReference type="NCBI Taxonomy" id="220664"/>
    <lineage>
        <taxon>Bacteria</taxon>
        <taxon>Pseudomonadati</taxon>
        <taxon>Pseudomonadota</taxon>
        <taxon>Gammaproteobacteria</taxon>
        <taxon>Pseudomonadales</taxon>
        <taxon>Pseudomonadaceae</taxon>
        <taxon>Pseudomonas</taxon>
    </lineage>
</organism>
<evidence type="ECO:0000255" key="1">
    <source>
        <dbReference type="HAMAP-Rule" id="MF_00337"/>
    </source>
</evidence>
<comment type="function">
    <text evidence="1">Bidirectionally degrades single-stranded DNA into large acid-insoluble oligonucleotides, which are then degraded further into small acid-soluble oligonucleotides.</text>
</comment>
<comment type="catalytic activity">
    <reaction evidence="1">
        <text>Exonucleolytic cleavage in either 5'- to 3'- or 3'- to 5'-direction to yield nucleoside 5'-phosphates.</text>
        <dbReference type="EC" id="3.1.11.6"/>
    </reaction>
</comment>
<comment type="subunit">
    <text evidence="1">Heterooligomer composed of large and small subunits.</text>
</comment>
<comment type="subcellular location">
    <subcellularLocation>
        <location evidence="1">Cytoplasm</location>
    </subcellularLocation>
</comment>
<comment type="similarity">
    <text evidence="1">Belongs to the XseB family.</text>
</comment>
<sequence length="80" mass="8875">MARKKAALDFEQSLADLQTLVERLENGELSLEDSLTAFEQGIGLTRDCQAALAQAEQKVQILLERDGELAEQPFDAEQPE</sequence>
<keyword id="KW-0963">Cytoplasm</keyword>
<keyword id="KW-0269">Exonuclease</keyword>
<keyword id="KW-0378">Hydrolase</keyword>
<keyword id="KW-0540">Nuclease</keyword>
<proteinExistence type="inferred from homology"/>
<accession>Q4K5A7</accession>
<protein>
    <recommendedName>
        <fullName evidence="1">Exodeoxyribonuclease 7 small subunit</fullName>
        <ecNumber evidence="1">3.1.11.6</ecNumber>
    </recommendedName>
    <alternativeName>
        <fullName evidence="1">Exodeoxyribonuclease VII small subunit</fullName>
        <shortName evidence="1">Exonuclease VII small subunit</shortName>
    </alternativeName>
</protein>
<dbReference type="EC" id="3.1.11.6" evidence="1"/>
<dbReference type="EMBL" id="CP000076">
    <property type="protein sequence ID" value="AAY94714.1"/>
    <property type="molecule type" value="Genomic_DNA"/>
</dbReference>
<dbReference type="RefSeq" id="WP_011063724.1">
    <property type="nucleotide sequence ID" value="NC_004129.6"/>
</dbReference>
<dbReference type="SMR" id="Q4K5A7"/>
<dbReference type="STRING" id="220664.PFL_5508"/>
<dbReference type="KEGG" id="pfl:PFL_5508"/>
<dbReference type="eggNOG" id="COG1722">
    <property type="taxonomic scope" value="Bacteria"/>
</dbReference>
<dbReference type="HOGENOM" id="CLU_145918_3_3_6"/>
<dbReference type="Proteomes" id="UP000008540">
    <property type="component" value="Chromosome"/>
</dbReference>
<dbReference type="GO" id="GO:0005829">
    <property type="term" value="C:cytosol"/>
    <property type="evidence" value="ECO:0007669"/>
    <property type="project" value="TreeGrafter"/>
</dbReference>
<dbReference type="GO" id="GO:0009318">
    <property type="term" value="C:exodeoxyribonuclease VII complex"/>
    <property type="evidence" value="ECO:0007669"/>
    <property type="project" value="InterPro"/>
</dbReference>
<dbReference type="GO" id="GO:0008855">
    <property type="term" value="F:exodeoxyribonuclease VII activity"/>
    <property type="evidence" value="ECO:0007669"/>
    <property type="project" value="UniProtKB-UniRule"/>
</dbReference>
<dbReference type="GO" id="GO:0006308">
    <property type="term" value="P:DNA catabolic process"/>
    <property type="evidence" value="ECO:0007669"/>
    <property type="project" value="UniProtKB-UniRule"/>
</dbReference>
<dbReference type="Gene3D" id="1.10.287.1040">
    <property type="entry name" value="Exonuclease VII, small subunit"/>
    <property type="match status" value="1"/>
</dbReference>
<dbReference type="HAMAP" id="MF_00337">
    <property type="entry name" value="Exonuc_7_S"/>
    <property type="match status" value="1"/>
</dbReference>
<dbReference type="InterPro" id="IPR003761">
    <property type="entry name" value="Exonuc_VII_S"/>
</dbReference>
<dbReference type="InterPro" id="IPR037004">
    <property type="entry name" value="Exonuc_VII_ssu_sf"/>
</dbReference>
<dbReference type="NCBIfam" id="NF002140">
    <property type="entry name" value="PRK00977.1-4"/>
    <property type="match status" value="1"/>
</dbReference>
<dbReference type="NCBIfam" id="TIGR01280">
    <property type="entry name" value="xseB"/>
    <property type="match status" value="1"/>
</dbReference>
<dbReference type="PANTHER" id="PTHR34137">
    <property type="entry name" value="EXODEOXYRIBONUCLEASE 7 SMALL SUBUNIT"/>
    <property type="match status" value="1"/>
</dbReference>
<dbReference type="PANTHER" id="PTHR34137:SF1">
    <property type="entry name" value="EXODEOXYRIBONUCLEASE 7 SMALL SUBUNIT"/>
    <property type="match status" value="1"/>
</dbReference>
<dbReference type="Pfam" id="PF02609">
    <property type="entry name" value="Exonuc_VII_S"/>
    <property type="match status" value="1"/>
</dbReference>
<dbReference type="PIRSF" id="PIRSF006488">
    <property type="entry name" value="Exonuc_VII_S"/>
    <property type="match status" value="1"/>
</dbReference>
<dbReference type="SUPFAM" id="SSF116842">
    <property type="entry name" value="XseB-like"/>
    <property type="match status" value="1"/>
</dbReference>
<name>EX7S_PSEF5</name>
<gene>
    <name evidence="1" type="primary">xseB</name>
    <name type="ordered locus">PFL_5508</name>
</gene>
<reference key="1">
    <citation type="journal article" date="2005" name="Nat. Biotechnol.">
        <title>Complete genome sequence of the plant commensal Pseudomonas fluorescens Pf-5.</title>
        <authorList>
            <person name="Paulsen I.T."/>
            <person name="Press C.M."/>
            <person name="Ravel J."/>
            <person name="Kobayashi D.Y."/>
            <person name="Myers G.S.A."/>
            <person name="Mavrodi D.V."/>
            <person name="DeBoy R.T."/>
            <person name="Seshadri R."/>
            <person name="Ren Q."/>
            <person name="Madupu R."/>
            <person name="Dodson R.J."/>
            <person name="Durkin A.S."/>
            <person name="Brinkac L.M."/>
            <person name="Daugherty S.C."/>
            <person name="Sullivan S.A."/>
            <person name="Rosovitz M.J."/>
            <person name="Gwinn M.L."/>
            <person name="Zhou L."/>
            <person name="Schneider D.J."/>
            <person name="Cartinhour S.W."/>
            <person name="Nelson W.C."/>
            <person name="Weidman J."/>
            <person name="Watkins K."/>
            <person name="Tran K."/>
            <person name="Khouri H."/>
            <person name="Pierson E.A."/>
            <person name="Pierson L.S. III"/>
            <person name="Thomashow L.S."/>
            <person name="Loper J.E."/>
        </authorList>
    </citation>
    <scope>NUCLEOTIDE SEQUENCE [LARGE SCALE GENOMIC DNA]</scope>
    <source>
        <strain>ATCC BAA-477 / NRRL B-23932 / Pf-5</strain>
    </source>
</reference>